<evidence type="ECO:0000250" key="1">
    <source>
        <dbReference type="UniProtKB" id="Q6SEK1"/>
    </source>
</evidence>
<evidence type="ECO:0000255" key="2"/>
<evidence type="ECO:0000255" key="3">
    <source>
        <dbReference type="PROSITE-ProRule" id="PRU01188"/>
    </source>
</evidence>
<evidence type="ECO:0000269" key="4">
    <source>
    </source>
</evidence>
<evidence type="ECO:0000305" key="5"/>
<evidence type="ECO:0000312" key="6">
    <source>
        <dbReference type="EMBL" id="DAA04485.1"/>
    </source>
</evidence>
<organism>
    <name type="scientific">Rattus norvegicus</name>
    <name type="common">Rat</name>
    <dbReference type="NCBI Taxonomy" id="10116"/>
    <lineage>
        <taxon>Eukaryota</taxon>
        <taxon>Metazoa</taxon>
        <taxon>Chordata</taxon>
        <taxon>Craniata</taxon>
        <taxon>Vertebrata</taxon>
        <taxon>Euteleostomi</taxon>
        <taxon>Mammalia</taxon>
        <taxon>Eutheria</taxon>
        <taxon>Euarchontoglires</taxon>
        <taxon>Glires</taxon>
        <taxon>Rodentia</taxon>
        <taxon>Myomorpha</taxon>
        <taxon>Muroidea</taxon>
        <taxon>Muridae</taxon>
        <taxon>Murinae</taxon>
        <taxon>Rattus</taxon>
    </lineage>
</organism>
<reference evidence="5" key="1">
    <citation type="journal article" date="2004" name="Nature">
        <title>Genome sequence of the Brown Norway rat yields insights into mammalian evolution.</title>
        <authorList>
            <person name="Gibbs R.A."/>
            <person name="Weinstock G.M."/>
            <person name="Metzker M.L."/>
            <person name="Muzny D.M."/>
            <person name="Sodergren E.J."/>
            <person name="Scherer S."/>
            <person name="Scott G."/>
            <person name="Steffen D."/>
            <person name="Worley K.C."/>
            <person name="Burch P.E."/>
            <person name="Okwuonu G."/>
            <person name="Hines S."/>
            <person name="Lewis L."/>
            <person name="Deramo C."/>
            <person name="Delgado O."/>
            <person name="Dugan-Rocha S."/>
            <person name="Miner G."/>
            <person name="Morgan M."/>
            <person name="Hawes A."/>
            <person name="Gill R."/>
            <person name="Holt R.A."/>
            <person name="Adams M.D."/>
            <person name="Amanatides P.G."/>
            <person name="Baden-Tillson H."/>
            <person name="Barnstead M."/>
            <person name="Chin S."/>
            <person name="Evans C.A."/>
            <person name="Ferriera S."/>
            <person name="Fosler C."/>
            <person name="Glodek A."/>
            <person name="Gu Z."/>
            <person name="Jennings D."/>
            <person name="Kraft C.L."/>
            <person name="Nguyen T."/>
            <person name="Pfannkoch C.M."/>
            <person name="Sitter C."/>
            <person name="Sutton G.G."/>
            <person name="Venter J.C."/>
            <person name="Woodage T."/>
            <person name="Smith D."/>
            <person name="Lee H.-M."/>
            <person name="Gustafson E."/>
            <person name="Cahill P."/>
            <person name="Kana A."/>
            <person name="Doucette-Stamm L."/>
            <person name="Weinstock K."/>
            <person name="Fechtel K."/>
            <person name="Weiss R.B."/>
            <person name="Dunn D.M."/>
            <person name="Green E.D."/>
            <person name="Blakesley R.W."/>
            <person name="Bouffard G.G."/>
            <person name="De Jong P.J."/>
            <person name="Osoegawa K."/>
            <person name="Zhu B."/>
            <person name="Marra M."/>
            <person name="Schein J."/>
            <person name="Bosdet I."/>
            <person name="Fjell C."/>
            <person name="Jones S."/>
            <person name="Krzywinski M."/>
            <person name="Mathewson C."/>
            <person name="Siddiqui A."/>
            <person name="Wye N."/>
            <person name="McPherson J."/>
            <person name="Zhao S."/>
            <person name="Fraser C.M."/>
            <person name="Shetty J."/>
            <person name="Shatsman S."/>
            <person name="Geer K."/>
            <person name="Chen Y."/>
            <person name="Abramzon S."/>
            <person name="Nierman W.C."/>
            <person name="Havlak P.H."/>
            <person name="Chen R."/>
            <person name="Durbin K.J."/>
            <person name="Egan A."/>
            <person name="Ren Y."/>
            <person name="Song X.-Z."/>
            <person name="Li B."/>
            <person name="Liu Y."/>
            <person name="Qin X."/>
            <person name="Cawley S."/>
            <person name="Cooney A.J."/>
            <person name="D'Souza L.M."/>
            <person name="Martin K."/>
            <person name="Wu J.Q."/>
            <person name="Gonzalez-Garay M.L."/>
            <person name="Jackson A.R."/>
            <person name="Kalafus K.J."/>
            <person name="McLeod M.P."/>
            <person name="Milosavljevic A."/>
            <person name="Virk D."/>
            <person name="Volkov A."/>
            <person name="Wheeler D.A."/>
            <person name="Zhang Z."/>
            <person name="Bailey J.A."/>
            <person name="Eichler E.E."/>
            <person name="Tuzun E."/>
            <person name="Birney E."/>
            <person name="Mongin E."/>
            <person name="Ureta-Vidal A."/>
            <person name="Woodwark C."/>
            <person name="Zdobnov E."/>
            <person name="Bork P."/>
            <person name="Suyama M."/>
            <person name="Torrents D."/>
            <person name="Alexandersson M."/>
            <person name="Trask B.J."/>
            <person name="Young J.M."/>
            <person name="Huang H."/>
            <person name="Wang H."/>
            <person name="Xing H."/>
            <person name="Daniels S."/>
            <person name="Gietzen D."/>
            <person name="Schmidt J."/>
            <person name="Stevens K."/>
            <person name="Vitt U."/>
            <person name="Wingrove J."/>
            <person name="Camara F."/>
            <person name="Mar Alba M."/>
            <person name="Abril J.F."/>
            <person name="Guigo R."/>
            <person name="Smit A."/>
            <person name="Dubchak I."/>
            <person name="Rubin E.M."/>
            <person name="Couronne O."/>
            <person name="Poliakov A."/>
            <person name="Huebner N."/>
            <person name="Ganten D."/>
            <person name="Goesele C."/>
            <person name="Hummel O."/>
            <person name="Kreitler T."/>
            <person name="Lee Y.-A."/>
            <person name="Monti J."/>
            <person name="Schulz H."/>
            <person name="Zimdahl H."/>
            <person name="Himmelbauer H."/>
            <person name="Lehrach H."/>
            <person name="Jacob H.J."/>
            <person name="Bromberg S."/>
            <person name="Gullings-Handley J."/>
            <person name="Jensen-Seaman M.I."/>
            <person name="Kwitek A.E."/>
            <person name="Lazar J."/>
            <person name="Pasko D."/>
            <person name="Tonellato P.J."/>
            <person name="Twigger S."/>
            <person name="Ponting C.P."/>
            <person name="Duarte J.M."/>
            <person name="Rice S."/>
            <person name="Goodstadt L."/>
            <person name="Beatson S.A."/>
            <person name="Emes R.D."/>
            <person name="Winter E.E."/>
            <person name="Webber C."/>
            <person name="Brandt P."/>
            <person name="Nyakatura G."/>
            <person name="Adetobi M."/>
            <person name="Chiaromonte F."/>
            <person name="Elnitski L."/>
            <person name="Eswara P."/>
            <person name="Hardison R.C."/>
            <person name="Hou M."/>
            <person name="Kolbe D."/>
            <person name="Makova K."/>
            <person name="Miller W."/>
            <person name="Nekrutenko A."/>
            <person name="Riemer C."/>
            <person name="Schwartz S."/>
            <person name="Taylor J."/>
            <person name="Yang S."/>
            <person name="Zhang Y."/>
            <person name="Lindpaintner K."/>
            <person name="Andrews T.D."/>
            <person name="Caccamo M."/>
            <person name="Clamp M."/>
            <person name="Clarke L."/>
            <person name="Curwen V."/>
            <person name="Durbin R.M."/>
            <person name="Eyras E."/>
            <person name="Searle S.M."/>
            <person name="Cooper G.M."/>
            <person name="Batzoglou S."/>
            <person name="Brudno M."/>
            <person name="Sidow A."/>
            <person name="Stone E.A."/>
            <person name="Payseur B.A."/>
            <person name="Bourque G."/>
            <person name="Lopez-Otin C."/>
            <person name="Puente X.S."/>
            <person name="Chakrabarti K."/>
            <person name="Chatterji S."/>
            <person name="Dewey C."/>
            <person name="Pachter L."/>
            <person name="Bray N."/>
            <person name="Yap V.B."/>
            <person name="Caspi A."/>
            <person name="Tesler G."/>
            <person name="Pevzner P.A."/>
            <person name="Haussler D."/>
            <person name="Roskin K.M."/>
            <person name="Baertsch R."/>
            <person name="Clawson H."/>
            <person name="Furey T.S."/>
            <person name="Hinrichs A.S."/>
            <person name="Karolchik D."/>
            <person name="Kent W.J."/>
            <person name="Rosenbloom K.R."/>
            <person name="Trumbower H."/>
            <person name="Weirauch M."/>
            <person name="Cooper D.N."/>
            <person name="Stenson P.D."/>
            <person name="Ma B."/>
            <person name="Brent M."/>
            <person name="Arumugam M."/>
            <person name="Shteynberg D."/>
            <person name="Copley R.R."/>
            <person name="Taylor M.S."/>
            <person name="Riethman H."/>
            <person name="Mudunuri U."/>
            <person name="Peterson J."/>
            <person name="Guyer M."/>
            <person name="Felsenfeld A."/>
            <person name="Old S."/>
            <person name="Mockrin S."/>
            <person name="Collins F.S."/>
        </authorList>
    </citation>
    <scope>NUCLEOTIDE SEQUENCE [LARGE SCALE GENOMIC DNA]</scope>
    <source>
        <strain evidence="4">Brown Norway</strain>
    </source>
</reference>
<reference evidence="5 6" key="2">
    <citation type="journal article" date="2004" name="Eur. J. Cell Biol.">
        <title>Comprehensive analysis of keratin gene clusters in humans and rodents.</title>
        <authorList>
            <person name="Hesse M."/>
            <person name="Zimek A."/>
            <person name="Weber K."/>
            <person name="Magin T.M."/>
        </authorList>
    </citation>
    <scope>IDENTIFICATION</scope>
    <source>
        <strain evidence="6">Brown Norway</strain>
    </source>
</reference>
<sequence>MASTTSIRQFSTSGSVKGLCAPGMGFSRMSSVRIGGACRAPSLLGGGSCSNMSVTSSRFSAGLGGSYGGGYTCSLGGGFGSSFGVSDALLGGSEKETMQNLNDRLATYLDRVRALEEANTDLEVKIREWYKKQGPGPARDYSPYFKTIEDLRNKILAATIDNASIVLQIDNARLAADDFRTKYETELNLRMSVEADINGLRRVLDELTLARADLEMQIETLKEELAYLKKNHEEEMNALRGQVGGDVNVEMDAAPGVDLSRILNEMRDQYEKMAEKNRKDAEEWFFTKTEELNREVATNTEALQSSRTEITELRRSVQNLEIELQSQLSMKASLENSLAETEARYGAQLAQLQGLISSMEQQLCELRCDMERQNHEYQVLLDVKTRLEQEIATYRRLLEGEDAHLATQYSSSLASQASREGTVTSRQVRTIVEEVQDGKVVSSREQVHRSTH</sequence>
<name>K1C42_RAT</name>
<gene>
    <name evidence="1" type="primary">Krt42</name>
    <name evidence="6" type="synonym">Ka22</name>
</gene>
<keyword id="KW-0175">Coiled coil</keyword>
<keyword id="KW-0963">Cytoplasm</keyword>
<keyword id="KW-0403">Intermediate filament</keyword>
<keyword id="KW-0416">Keratin</keyword>
<keyword id="KW-1185">Reference proteome</keyword>
<dbReference type="EMBL" id="AABR03075599">
    <property type="status" value="NOT_ANNOTATED_CDS"/>
    <property type="molecule type" value="Genomic_DNA"/>
</dbReference>
<dbReference type="EMBL" id="BK004051">
    <property type="protein sequence ID" value="DAA04485.1"/>
    <property type="molecule type" value="mRNA"/>
</dbReference>
<dbReference type="RefSeq" id="NP_001008816.1">
    <property type="nucleotide sequence ID" value="NM_001008816.1"/>
</dbReference>
<dbReference type="SMR" id="Q6IFU7"/>
<dbReference type="FunCoup" id="Q6IFU7">
    <property type="interactions" value="121"/>
</dbReference>
<dbReference type="STRING" id="10116.ENSRNOP00000048162"/>
<dbReference type="GlyGen" id="Q6IFU7">
    <property type="glycosylation" value="1 site, 1 O-linked glycan (1 site)"/>
</dbReference>
<dbReference type="iPTMnet" id="Q6IFU7"/>
<dbReference type="PhosphoSitePlus" id="Q6IFU7"/>
<dbReference type="jPOST" id="Q6IFU7"/>
<dbReference type="PaxDb" id="10116-ENSRNOP00000048162"/>
<dbReference type="Ensembl" id="ENSRNOT00000046956.3">
    <property type="protein sequence ID" value="ENSRNOP00000048162.1"/>
    <property type="gene ID" value="ENSRNOG00000034087.3"/>
</dbReference>
<dbReference type="GeneID" id="450231"/>
<dbReference type="KEGG" id="rno:450231"/>
<dbReference type="UCSC" id="RGD:1359182">
    <property type="organism name" value="rat"/>
</dbReference>
<dbReference type="AGR" id="RGD:1359182"/>
<dbReference type="CTD" id="68239"/>
<dbReference type="RGD" id="1359182">
    <property type="gene designation" value="Krt42"/>
</dbReference>
<dbReference type="eggNOG" id="ENOG502R8V7">
    <property type="taxonomic scope" value="Eukaryota"/>
</dbReference>
<dbReference type="GeneTree" id="ENSGT00940000163247"/>
<dbReference type="HOGENOM" id="CLU_012560_8_1_1"/>
<dbReference type="InParanoid" id="Q6IFU7"/>
<dbReference type="OMA" id="TDMREQY"/>
<dbReference type="OrthoDB" id="2441647at2759"/>
<dbReference type="PhylomeDB" id="Q6IFU7"/>
<dbReference type="TreeFam" id="TF332742"/>
<dbReference type="PRO" id="PR:Q6IFU7"/>
<dbReference type="Proteomes" id="UP000002494">
    <property type="component" value="Chromosome 10"/>
</dbReference>
<dbReference type="Bgee" id="ENSRNOG00000034087">
    <property type="expression patterns" value="Expressed in ovary and 5 other cell types or tissues"/>
</dbReference>
<dbReference type="GO" id="GO:0005737">
    <property type="term" value="C:cytoplasm"/>
    <property type="evidence" value="ECO:0007669"/>
    <property type="project" value="UniProtKB-SubCell"/>
</dbReference>
<dbReference type="GO" id="GO:0005856">
    <property type="term" value="C:cytoskeleton"/>
    <property type="evidence" value="ECO:0000318"/>
    <property type="project" value="GO_Central"/>
</dbReference>
<dbReference type="GO" id="GO:0005882">
    <property type="term" value="C:intermediate filament"/>
    <property type="evidence" value="ECO:0007669"/>
    <property type="project" value="UniProtKB-KW"/>
</dbReference>
<dbReference type="GO" id="GO:0005198">
    <property type="term" value="F:structural molecule activity"/>
    <property type="evidence" value="ECO:0007669"/>
    <property type="project" value="InterPro"/>
</dbReference>
<dbReference type="GO" id="GO:0030855">
    <property type="term" value="P:epithelial cell differentiation"/>
    <property type="evidence" value="ECO:0000318"/>
    <property type="project" value="GO_Central"/>
</dbReference>
<dbReference type="GO" id="GO:0045109">
    <property type="term" value="P:intermediate filament organization"/>
    <property type="evidence" value="ECO:0000318"/>
    <property type="project" value="GO_Central"/>
</dbReference>
<dbReference type="FunFam" id="1.20.5.1160:FF:000002">
    <property type="entry name" value="Type I keratin 10"/>
    <property type="match status" value="1"/>
</dbReference>
<dbReference type="FunFam" id="1.20.5.170:FF:000002">
    <property type="entry name" value="Type I keratin KA11"/>
    <property type="match status" value="1"/>
</dbReference>
<dbReference type="FunFam" id="1.20.5.500:FF:000001">
    <property type="entry name" value="Type II keratin 23"/>
    <property type="match status" value="1"/>
</dbReference>
<dbReference type="Gene3D" id="1.20.5.170">
    <property type="match status" value="1"/>
</dbReference>
<dbReference type="Gene3D" id="1.20.5.500">
    <property type="entry name" value="Single helix bin"/>
    <property type="match status" value="1"/>
</dbReference>
<dbReference type="Gene3D" id="1.20.5.1160">
    <property type="entry name" value="Vasodilator-stimulated phosphoprotein"/>
    <property type="match status" value="1"/>
</dbReference>
<dbReference type="InterPro" id="IPR018039">
    <property type="entry name" value="IF_conserved"/>
</dbReference>
<dbReference type="InterPro" id="IPR039008">
    <property type="entry name" value="IF_rod_dom"/>
</dbReference>
<dbReference type="InterPro" id="IPR002957">
    <property type="entry name" value="Keratin_I"/>
</dbReference>
<dbReference type="PANTHER" id="PTHR23239">
    <property type="entry name" value="INTERMEDIATE FILAMENT"/>
    <property type="match status" value="1"/>
</dbReference>
<dbReference type="PANTHER" id="PTHR23239:SF184">
    <property type="entry name" value="KERATIN, TYPE I CYTOSKELETAL 42"/>
    <property type="match status" value="1"/>
</dbReference>
<dbReference type="Pfam" id="PF00038">
    <property type="entry name" value="Filament"/>
    <property type="match status" value="1"/>
</dbReference>
<dbReference type="PRINTS" id="PR01248">
    <property type="entry name" value="TYPE1KERATIN"/>
</dbReference>
<dbReference type="SMART" id="SM01391">
    <property type="entry name" value="Filament"/>
    <property type="match status" value="1"/>
</dbReference>
<dbReference type="SUPFAM" id="SSF64593">
    <property type="entry name" value="Intermediate filament protein, coiled coil region"/>
    <property type="match status" value="2"/>
</dbReference>
<dbReference type="SUPFAM" id="SSF46579">
    <property type="entry name" value="Prefoldin"/>
    <property type="match status" value="1"/>
</dbReference>
<dbReference type="PROSITE" id="PS00226">
    <property type="entry name" value="IF_ROD_1"/>
    <property type="match status" value="1"/>
</dbReference>
<dbReference type="PROSITE" id="PS51842">
    <property type="entry name" value="IF_ROD_2"/>
    <property type="match status" value="1"/>
</dbReference>
<comment type="subunit">
    <text evidence="1 5">Heterodimer of a type I and a type II keratin. Colocalizes with KRT8/KRT18 filament network (By similarity).</text>
</comment>
<comment type="subcellular location">
    <subcellularLocation>
        <location evidence="1">Cytoplasm</location>
    </subcellularLocation>
</comment>
<comment type="miscellaneous">
    <text evidence="5">There are two types of cytoskeletal and microfibrillar keratin: I (acidic; 40-55 kDa) and II (neutral to basic; 56-70 kDa).</text>
</comment>
<comment type="similarity">
    <text evidence="3">Belongs to the intermediate filament family.</text>
</comment>
<proteinExistence type="inferred from homology"/>
<protein>
    <recommendedName>
        <fullName>Keratin, type I cytoskeletal 42</fullName>
    </recommendedName>
    <alternativeName>
        <fullName>Cytokeratin-42</fullName>
        <shortName>CK-42</shortName>
    </alternativeName>
    <alternativeName>
        <fullName>Keratin-42</fullName>
        <shortName>K42</shortName>
    </alternativeName>
    <alternativeName>
        <fullName>Type I keratin Ka22</fullName>
    </alternativeName>
</protein>
<accession>Q6IFU7</accession>
<feature type="chain" id="PRO_0000311715" description="Keratin, type I cytoskeletal 42">
    <location>
        <begin position="1"/>
        <end position="452"/>
    </location>
</feature>
<feature type="domain" description="IF rod" evidence="3">
    <location>
        <begin position="94"/>
        <end position="405"/>
    </location>
</feature>
<feature type="region of interest" description="Head" evidence="2">
    <location>
        <begin position="4"/>
        <end position="93"/>
    </location>
</feature>
<feature type="region of interest" description="Coil 1A" evidence="2">
    <location>
        <begin position="94"/>
        <end position="129"/>
    </location>
</feature>
<feature type="region of interest" description="Linker 1" evidence="2">
    <location>
        <begin position="130"/>
        <end position="147"/>
    </location>
</feature>
<feature type="region of interest" description="Coil 1B" evidence="2">
    <location>
        <begin position="148"/>
        <end position="239"/>
    </location>
</feature>
<feature type="region of interest" description="Linker 12" evidence="2">
    <location>
        <begin position="240"/>
        <end position="262"/>
    </location>
</feature>
<feature type="region of interest" description="Coil 2" evidence="2">
    <location>
        <begin position="263"/>
        <end position="401"/>
    </location>
</feature>
<feature type="region of interest" description="Tail" evidence="2">
    <location>
        <begin position="402"/>
        <end position="452"/>
    </location>
</feature>
<feature type="coiled-coil region" evidence="2">
    <location>
        <begin position="93"/>
        <end position="132"/>
    </location>
</feature>
<feature type="coiled-coil region" evidence="2">
    <location>
        <begin position="188"/>
        <end position="407"/>
    </location>
</feature>